<feature type="peptide" id="PRO_0000400967" description="Hainantoxin F5-22.36">
    <location>
        <begin position="1"/>
        <end position="43" status="greater than"/>
    </location>
</feature>
<feature type="disulfide bond" evidence="1">
    <location>
        <begin position="1"/>
        <end position="19"/>
    </location>
</feature>
<feature type="disulfide bond" evidence="1">
    <location>
        <begin position="8"/>
        <end position="24"/>
    </location>
</feature>
<feature type="disulfide bond" evidence="1">
    <location>
        <begin position="18"/>
        <end position="38"/>
    </location>
</feature>
<feature type="non-terminal residue">
    <location>
        <position position="43"/>
    </location>
</feature>
<keyword id="KW-0903">Direct protein sequencing</keyword>
<keyword id="KW-1015">Disulfide bond</keyword>
<keyword id="KW-0872">Ion channel impairing toxin</keyword>
<keyword id="KW-0960">Knottin</keyword>
<keyword id="KW-0964">Secreted</keyword>
<keyword id="KW-0800">Toxin</keyword>
<dbReference type="SMR" id="P0CH73"/>
<dbReference type="GO" id="GO:0005576">
    <property type="term" value="C:extracellular region"/>
    <property type="evidence" value="ECO:0007669"/>
    <property type="project" value="UniProtKB-SubCell"/>
</dbReference>
<dbReference type="GO" id="GO:0019871">
    <property type="term" value="F:sodium channel inhibitor activity"/>
    <property type="evidence" value="ECO:0007669"/>
    <property type="project" value="InterPro"/>
</dbReference>
<dbReference type="GO" id="GO:0090729">
    <property type="term" value="F:toxin activity"/>
    <property type="evidence" value="ECO:0007669"/>
    <property type="project" value="UniProtKB-KW"/>
</dbReference>
<dbReference type="InterPro" id="IPR012627">
    <property type="entry name" value="Toxin_22"/>
</dbReference>
<dbReference type="Pfam" id="PF08092">
    <property type="entry name" value="Toxin_22"/>
    <property type="match status" value="1"/>
</dbReference>
<comment type="function">
    <text evidence="1">Probable ion channel inhibitor.</text>
</comment>
<comment type="subcellular location">
    <subcellularLocation>
        <location evidence="2">Secreted</location>
    </subcellularLocation>
</comment>
<comment type="tissue specificity">
    <text evidence="4">Expressed by the venom gland.</text>
</comment>
<comment type="domain">
    <text evidence="1">The presence of a 'disulfide through disulfide knot' structurally defines this protein as a knottin.</text>
</comment>
<comment type="similarity">
    <text evidence="3">Belongs to the neurotoxin 14 (magi-1) family. 02 (HWTX-XVIc) subfamily.</text>
</comment>
<reference key="1">
    <citation type="journal article" date="2010" name="J. Proteome Res.">
        <title>Molecular diversification of peptide toxins from the tarantula Haplopelma hainanum (Ornithoctonus hainana) venom based on transcriptomic, peptidomic, and genomic analyses.</title>
        <authorList>
            <person name="Tang X."/>
            <person name="Zhang Y."/>
            <person name="Hu W."/>
            <person name="Xu D."/>
            <person name="Tao H."/>
            <person name="Yang X."/>
            <person name="Li Y."/>
            <person name="Jiang L."/>
            <person name="Liang S."/>
        </authorList>
    </citation>
    <scope>PROTEIN SEQUENCE</scope>
    <scope>IDENTIFICATION BY MASS SPECTROMETRY</scope>
    <scope>SUBCELLULAR LOCATION</scope>
    <source>
        <tissue>Venom</tissue>
    </source>
</reference>
<proteinExistence type="evidence at protein level"/>
<protein>
    <recommendedName>
        <fullName>Hainantoxin F5-22.36</fullName>
    </recommendedName>
    <alternativeName>
        <fullName>Peptide F5-22.36</fullName>
    </alternativeName>
</protein>
<sequence length="43" mass="5061">CNGRDVPCDPDPAKNRRCCSGLECLKPYLHGTWYQDYCYYVEK</sequence>
<evidence type="ECO:0000250" key="1"/>
<evidence type="ECO:0000269" key="2">
    <source>
    </source>
</evidence>
<evidence type="ECO:0000305" key="3"/>
<evidence type="ECO:0000305" key="4">
    <source>
    </source>
</evidence>
<accession>P0CH73</accession>
<name>HN522_CYRHA</name>
<organism>
    <name type="scientific">Cyriopagopus hainanus</name>
    <name type="common">Chinese bird spider</name>
    <name type="synonym">Haplopelma hainanum</name>
    <dbReference type="NCBI Taxonomy" id="209901"/>
    <lineage>
        <taxon>Eukaryota</taxon>
        <taxon>Metazoa</taxon>
        <taxon>Ecdysozoa</taxon>
        <taxon>Arthropoda</taxon>
        <taxon>Chelicerata</taxon>
        <taxon>Arachnida</taxon>
        <taxon>Araneae</taxon>
        <taxon>Mygalomorphae</taxon>
        <taxon>Theraphosidae</taxon>
        <taxon>Haplopelma</taxon>
    </lineage>
</organism>